<reference key="1">
    <citation type="submission" date="2007-07" db="EMBL/GenBank/DDBJ databases">
        <title>Complete sequence of Fervidobacterium nodosum Rt17-B1.</title>
        <authorList>
            <consortium name="US DOE Joint Genome Institute"/>
            <person name="Copeland A."/>
            <person name="Lucas S."/>
            <person name="Lapidus A."/>
            <person name="Barry K."/>
            <person name="Glavina del Rio T."/>
            <person name="Dalin E."/>
            <person name="Tice H."/>
            <person name="Pitluck S."/>
            <person name="Saunders E."/>
            <person name="Brettin T."/>
            <person name="Bruce D."/>
            <person name="Detter J.C."/>
            <person name="Han C."/>
            <person name="Schmutz J."/>
            <person name="Larimer F."/>
            <person name="Land M."/>
            <person name="Hauser L."/>
            <person name="Kyrpides N."/>
            <person name="Mikhailova N."/>
            <person name="Nelson K."/>
            <person name="Gogarten J.P."/>
            <person name="Noll K."/>
            <person name="Richardson P."/>
        </authorList>
    </citation>
    <scope>NUCLEOTIDE SEQUENCE [LARGE SCALE GENOMIC DNA]</scope>
    <source>
        <strain>ATCC 35602 / DSM 5306 / Rt17-B1</strain>
    </source>
</reference>
<organism>
    <name type="scientific">Fervidobacterium nodosum (strain ATCC 35602 / DSM 5306 / Rt17-B1)</name>
    <dbReference type="NCBI Taxonomy" id="381764"/>
    <lineage>
        <taxon>Bacteria</taxon>
        <taxon>Thermotogati</taxon>
        <taxon>Thermotogota</taxon>
        <taxon>Thermotogae</taxon>
        <taxon>Thermotogales</taxon>
        <taxon>Fervidobacteriaceae</taxon>
        <taxon>Fervidobacterium</taxon>
    </lineage>
</organism>
<feature type="chain" id="PRO_1000071947" description="Small ribosomal subunit protein uS2">
    <location>
        <begin position="1"/>
        <end position="259"/>
    </location>
</feature>
<dbReference type="EMBL" id="CP000771">
    <property type="protein sequence ID" value="ABS61085.1"/>
    <property type="molecule type" value="Genomic_DNA"/>
</dbReference>
<dbReference type="RefSeq" id="WP_011994395.1">
    <property type="nucleotide sequence ID" value="NC_009718.1"/>
</dbReference>
<dbReference type="SMR" id="A7HMF2"/>
<dbReference type="STRING" id="381764.Fnod_1238"/>
<dbReference type="KEGG" id="fno:Fnod_1238"/>
<dbReference type="eggNOG" id="COG0052">
    <property type="taxonomic scope" value="Bacteria"/>
</dbReference>
<dbReference type="HOGENOM" id="CLU_040318_1_2_0"/>
<dbReference type="OrthoDB" id="9808036at2"/>
<dbReference type="Proteomes" id="UP000002415">
    <property type="component" value="Chromosome"/>
</dbReference>
<dbReference type="GO" id="GO:0022627">
    <property type="term" value="C:cytosolic small ribosomal subunit"/>
    <property type="evidence" value="ECO:0007669"/>
    <property type="project" value="TreeGrafter"/>
</dbReference>
<dbReference type="GO" id="GO:0003735">
    <property type="term" value="F:structural constituent of ribosome"/>
    <property type="evidence" value="ECO:0007669"/>
    <property type="project" value="InterPro"/>
</dbReference>
<dbReference type="GO" id="GO:0006412">
    <property type="term" value="P:translation"/>
    <property type="evidence" value="ECO:0007669"/>
    <property type="project" value="UniProtKB-UniRule"/>
</dbReference>
<dbReference type="CDD" id="cd01425">
    <property type="entry name" value="RPS2"/>
    <property type="match status" value="1"/>
</dbReference>
<dbReference type="FunFam" id="1.10.287.610:FF:000001">
    <property type="entry name" value="30S ribosomal protein S2"/>
    <property type="match status" value="1"/>
</dbReference>
<dbReference type="Gene3D" id="3.40.50.10490">
    <property type="entry name" value="Glucose-6-phosphate isomerase like protein, domain 1"/>
    <property type="match status" value="1"/>
</dbReference>
<dbReference type="Gene3D" id="1.10.287.610">
    <property type="entry name" value="Helix hairpin bin"/>
    <property type="match status" value="1"/>
</dbReference>
<dbReference type="HAMAP" id="MF_00291_B">
    <property type="entry name" value="Ribosomal_uS2_B"/>
    <property type="match status" value="1"/>
</dbReference>
<dbReference type="InterPro" id="IPR001865">
    <property type="entry name" value="Ribosomal_uS2"/>
</dbReference>
<dbReference type="InterPro" id="IPR005706">
    <property type="entry name" value="Ribosomal_uS2_bac/mit/plastid"/>
</dbReference>
<dbReference type="InterPro" id="IPR018130">
    <property type="entry name" value="Ribosomal_uS2_CS"/>
</dbReference>
<dbReference type="InterPro" id="IPR023591">
    <property type="entry name" value="Ribosomal_uS2_flav_dom_sf"/>
</dbReference>
<dbReference type="NCBIfam" id="TIGR01011">
    <property type="entry name" value="rpsB_bact"/>
    <property type="match status" value="1"/>
</dbReference>
<dbReference type="PANTHER" id="PTHR12534">
    <property type="entry name" value="30S RIBOSOMAL PROTEIN S2 PROKARYOTIC AND ORGANELLAR"/>
    <property type="match status" value="1"/>
</dbReference>
<dbReference type="PANTHER" id="PTHR12534:SF0">
    <property type="entry name" value="SMALL RIBOSOMAL SUBUNIT PROTEIN US2M"/>
    <property type="match status" value="1"/>
</dbReference>
<dbReference type="Pfam" id="PF00318">
    <property type="entry name" value="Ribosomal_S2"/>
    <property type="match status" value="1"/>
</dbReference>
<dbReference type="PRINTS" id="PR00395">
    <property type="entry name" value="RIBOSOMALS2"/>
</dbReference>
<dbReference type="SUPFAM" id="SSF52313">
    <property type="entry name" value="Ribosomal protein S2"/>
    <property type="match status" value="1"/>
</dbReference>
<dbReference type="PROSITE" id="PS00962">
    <property type="entry name" value="RIBOSOMAL_S2_1"/>
    <property type="match status" value="1"/>
</dbReference>
<dbReference type="PROSITE" id="PS00963">
    <property type="entry name" value="RIBOSOMAL_S2_2"/>
    <property type="match status" value="1"/>
</dbReference>
<keyword id="KW-1185">Reference proteome</keyword>
<keyword id="KW-0687">Ribonucleoprotein</keyword>
<keyword id="KW-0689">Ribosomal protein</keyword>
<proteinExistence type="inferred from homology"/>
<comment type="similarity">
    <text evidence="1">Belongs to the universal ribosomal protein uS2 family.</text>
</comment>
<evidence type="ECO:0000255" key="1">
    <source>
        <dbReference type="HAMAP-Rule" id="MF_00291"/>
    </source>
</evidence>
<evidence type="ECO:0000305" key="2"/>
<accession>A7HMF2</accession>
<gene>
    <name evidence="1" type="primary">rpsB</name>
    <name type="ordered locus">Fnod_1238</name>
</gene>
<name>RS2_FERNB</name>
<sequence length="259" mass="29156">MPVVTMKQLLEAGVHFGHRTQRWNPKMKPYIYGARKGIYIIDLQKTVKLIDEAYDFVRDVASKGGTILFVGTKKQAQQVVKNEAERCGGFYVNNRWLGGLLTNFQTIQSRIQRLIELEEMEANGELDKLPKKEQSKLRKTLEKLRKNLGGLKNMRGLPDVIFVVDPRKEKIAVEEANYLGIPIVAMVDTNCDPDPIDYVIPSNDDAIRAIALIASKIADAYLEGREGVPYSSEEAAAQPEEKIEEIEINIPEGIGEEEI</sequence>
<protein>
    <recommendedName>
        <fullName evidence="1">Small ribosomal subunit protein uS2</fullName>
    </recommendedName>
    <alternativeName>
        <fullName evidence="2">30S ribosomal protein S2</fullName>
    </alternativeName>
</protein>